<evidence type="ECO:0000250" key="1"/>
<evidence type="ECO:0000255" key="2"/>
<evidence type="ECO:0000305" key="3"/>
<feature type="chain" id="PRO_0000117881" description="NADH-ubiquinone oxidoreductase chain 4">
    <location>
        <begin position="1" status="less than"/>
        <end position="231" status="greater than"/>
    </location>
</feature>
<feature type="transmembrane region" description="Helical" evidence="2">
    <location>
        <begin position="1"/>
        <end position="21"/>
    </location>
</feature>
<feature type="transmembrane region" description="Helical" evidence="2">
    <location>
        <begin position="34"/>
        <end position="54"/>
    </location>
</feature>
<feature type="transmembrane region" description="Helical" evidence="2">
    <location>
        <begin position="63"/>
        <end position="85"/>
    </location>
</feature>
<feature type="transmembrane region" description="Helical" evidence="2">
    <location>
        <begin position="89"/>
        <end position="111"/>
    </location>
</feature>
<feature type="transmembrane region" description="Helical" evidence="2">
    <location>
        <begin position="128"/>
        <end position="148"/>
    </location>
</feature>
<feature type="transmembrane region" description="Helical" evidence="2">
    <location>
        <begin position="156"/>
        <end position="176"/>
    </location>
</feature>
<feature type="non-terminal residue">
    <location>
        <position position="1"/>
    </location>
</feature>
<feature type="non-terminal residue">
    <location>
        <position position="231"/>
    </location>
</feature>
<accession>O03727</accession>
<dbReference type="EC" id="7.1.1.2"/>
<dbReference type="EMBL" id="U41869">
    <property type="protein sequence ID" value="AAB46643.1"/>
    <property type="molecule type" value="Genomic_DNA"/>
</dbReference>
<dbReference type="SMR" id="O03727"/>
<dbReference type="GO" id="GO:0031966">
    <property type="term" value="C:mitochondrial membrane"/>
    <property type="evidence" value="ECO:0007669"/>
    <property type="project" value="UniProtKB-SubCell"/>
</dbReference>
<dbReference type="GO" id="GO:0008137">
    <property type="term" value="F:NADH dehydrogenase (ubiquinone) activity"/>
    <property type="evidence" value="ECO:0007669"/>
    <property type="project" value="UniProtKB-EC"/>
</dbReference>
<dbReference type="GO" id="GO:0048039">
    <property type="term" value="F:ubiquinone binding"/>
    <property type="evidence" value="ECO:0007669"/>
    <property type="project" value="TreeGrafter"/>
</dbReference>
<dbReference type="GO" id="GO:0042773">
    <property type="term" value="P:ATP synthesis coupled electron transport"/>
    <property type="evidence" value="ECO:0007669"/>
    <property type="project" value="InterPro"/>
</dbReference>
<dbReference type="GO" id="GO:0015990">
    <property type="term" value="P:electron transport coupled proton transport"/>
    <property type="evidence" value="ECO:0007669"/>
    <property type="project" value="TreeGrafter"/>
</dbReference>
<dbReference type="InterPro" id="IPR003918">
    <property type="entry name" value="NADH_UbQ_OxRdtase"/>
</dbReference>
<dbReference type="InterPro" id="IPR001750">
    <property type="entry name" value="ND/Mrp_TM"/>
</dbReference>
<dbReference type="PANTHER" id="PTHR43507">
    <property type="entry name" value="NADH-UBIQUINONE OXIDOREDUCTASE CHAIN 4"/>
    <property type="match status" value="1"/>
</dbReference>
<dbReference type="PANTHER" id="PTHR43507:SF20">
    <property type="entry name" value="NADH-UBIQUINONE OXIDOREDUCTASE CHAIN 4"/>
    <property type="match status" value="1"/>
</dbReference>
<dbReference type="Pfam" id="PF00361">
    <property type="entry name" value="Proton_antipo_M"/>
    <property type="match status" value="1"/>
</dbReference>
<keyword id="KW-0249">Electron transport</keyword>
<keyword id="KW-0472">Membrane</keyword>
<keyword id="KW-0496">Mitochondrion</keyword>
<keyword id="KW-0520">NAD</keyword>
<keyword id="KW-0679">Respiratory chain</keyword>
<keyword id="KW-1278">Translocase</keyword>
<keyword id="KW-0812">Transmembrane</keyword>
<keyword id="KW-1133">Transmembrane helix</keyword>
<keyword id="KW-0813">Transport</keyword>
<keyword id="KW-0830">Ubiquinone</keyword>
<reference key="1">
    <citation type="journal article" date="1996" name="Copeia">
        <title>Crotaline intergeneric relationships based on mitochondrial DNA sequence data.</title>
        <authorList>
            <person name="Kraus F."/>
            <person name="Mink D.G."/>
            <person name="Brown W.M."/>
        </authorList>
    </citation>
    <scope>NUCLEOTIDE SEQUENCE [GENOMIC DNA]</scope>
</reference>
<gene>
    <name type="primary">MT-ND4</name>
    <name type="synonym">MTND4</name>
    <name type="synonym">NADH4</name>
    <name type="synonym">ND4</name>
</gene>
<geneLocation type="mitochondrion"/>
<proteinExistence type="inferred from homology"/>
<organism>
    <name type="scientific">Gloydius intermedius</name>
    <name type="common">Central Asian pit viper</name>
    <name type="synonym">Agkistrodon intermedius</name>
    <dbReference type="NCBI Taxonomy" id="44732"/>
    <lineage>
        <taxon>Eukaryota</taxon>
        <taxon>Metazoa</taxon>
        <taxon>Chordata</taxon>
        <taxon>Craniata</taxon>
        <taxon>Vertebrata</taxon>
        <taxon>Euteleostomi</taxon>
        <taxon>Lepidosauria</taxon>
        <taxon>Squamata</taxon>
        <taxon>Bifurcata</taxon>
        <taxon>Unidentata</taxon>
        <taxon>Episquamata</taxon>
        <taxon>Toxicofera</taxon>
        <taxon>Serpentes</taxon>
        <taxon>Colubroidea</taxon>
        <taxon>Viperidae</taxon>
        <taxon>Crotalinae</taxon>
        <taxon>Gloydius</taxon>
    </lineage>
</organism>
<name>NU4M_GLOIT</name>
<sequence>PIAGSMVLAAILLKLGGYGIIRMMQIMPTTKTDMFLPFIVLALWGAILANLTCLQQTDLKSLIAYSSVSHMGLVVAAIMIQTPWGLSGAMTLMIAHGFTSSALFCLANTTYERTHTRILILTRGFHNILPMATTWWLLTNLMNIAIPPTMNFTSELLIMSALFSWCPTTIILLGLSMLITASYSLHMFLSTQMGPTLLNNQTEPTHSREHLLMTLHITPLMMISMKPELIM</sequence>
<comment type="function">
    <text evidence="1">Core subunit of the mitochondrial membrane respiratory chain NADH dehydrogenase (Complex I) that is believed to belong to the minimal assembly required for catalysis. Complex I functions in the transfer of electrons from NADH to the respiratory chain. The immediate electron acceptor for the enzyme is believed to be ubiquinone (By similarity).</text>
</comment>
<comment type="catalytic activity">
    <reaction>
        <text>a ubiquinone + NADH + 5 H(+)(in) = a ubiquinol + NAD(+) + 4 H(+)(out)</text>
        <dbReference type="Rhea" id="RHEA:29091"/>
        <dbReference type="Rhea" id="RHEA-COMP:9565"/>
        <dbReference type="Rhea" id="RHEA-COMP:9566"/>
        <dbReference type="ChEBI" id="CHEBI:15378"/>
        <dbReference type="ChEBI" id="CHEBI:16389"/>
        <dbReference type="ChEBI" id="CHEBI:17976"/>
        <dbReference type="ChEBI" id="CHEBI:57540"/>
        <dbReference type="ChEBI" id="CHEBI:57945"/>
        <dbReference type="EC" id="7.1.1.2"/>
    </reaction>
</comment>
<comment type="subcellular location">
    <subcellularLocation>
        <location evidence="1">Mitochondrion membrane</location>
        <topology evidence="1">Multi-pass membrane protein</topology>
    </subcellularLocation>
</comment>
<comment type="similarity">
    <text evidence="3">Belongs to the complex I subunit 4 family.</text>
</comment>
<protein>
    <recommendedName>
        <fullName>NADH-ubiquinone oxidoreductase chain 4</fullName>
        <ecNumber>7.1.1.2</ecNumber>
    </recommendedName>
    <alternativeName>
        <fullName>NADH dehydrogenase subunit 4</fullName>
    </alternativeName>
</protein>